<sequence length="454" mass="51811">MIYRKIIWGILYVTLMLFDTHRAQECEEMTDLNFKDSLAGTSLKVRLLLYTRADPSCGQLLSHQEPFSNSQFNVSSVTTFLIHGYRPTGSPPVWMKQFVEFLLNRRDMNVIVVDWNRGATNMNYWQVVKNTRKVANNLTDLIQKMKDNGANLSSIHMIGVSLGAHISGFTGANFNGEIGRITALDPAGPEFNGRPPEDRLDPSDALFVEALHTDMDALGYRNLLGHIDYYANGGADQPGCPKTILSGSEYFKCDHQRSVFLYMSSVNGSCPIIAYPCESYTDFQDGTCMDCGKFKSAGCPIFGYDSVRWRDTLVQLEQTRTYFQTNKASPFCKVGYKVDIVSWNQKTHWGYLTIKLSNGTEETQVELNHKSLKFERFQETSVLAQFERDIQPVKKITLKFCPRKGLRPRKKLRLLHIRLTPLQNHLRPLCRYDLLLEESKDVTFKPIPCEDSNF</sequence>
<name>LIPH_DANRE</name>
<proteinExistence type="evidence at transcript level"/>
<accession>Q6DBU8</accession>
<reference key="1">
    <citation type="submission" date="2004-07" db="EMBL/GenBank/DDBJ databases">
        <authorList>
            <consortium name="NIH - Zebrafish Gene Collection (ZGC) project"/>
        </authorList>
    </citation>
    <scope>NUCLEOTIDE SEQUENCE [LARGE SCALE MRNA]</scope>
</reference>
<protein>
    <recommendedName>
        <fullName>Lipase member H</fullName>
        <ecNumber>3.1.1.-</ecNumber>
    </recommendedName>
</protein>
<gene>
    <name type="primary">liph</name>
    <name type="ORF">zgc:91985</name>
</gene>
<keyword id="KW-1003">Cell membrane</keyword>
<keyword id="KW-1015">Disulfide bond</keyword>
<keyword id="KW-0325">Glycoprotein</keyword>
<keyword id="KW-0378">Hydrolase</keyword>
<keyword id="KW-0442">Lipid degradation</keyword>
<keyword id="KW-0443">Lipid metabolism</keyword>
<keyword id="KW-0472">Membrane</keyword>
<keyword id="KW-1185">Reference proteome</keyword>
<keyword id="KW-0964">Secreted</keyword>
<keyword id="KW-0732">Signal</keyword>
<evidence type="ECO:0000250" key="1"/>
<evidence type="ECO:0000250" key="2">
    <source>
        <dbReference type="UniProtKB" id="Q8WWY8"/>
    </source>
</evidence>
<evidence type="ECO:0000255" key="3"/>
<evidence type="ECO:0000305" key="4"/>
<organism>
    <name type="scientific">Danio rerio</name>
    <name type="common">Zebrafish</name>
    <name type="synonym">Brachydanio rerio</name>
    <dbReference type="NCBI Taxonomy" id="7955"/>
    <lineage>
        <taxon>Eukaryota</taxon>
        <taxon>Metazoa</taxon>
        <taxon>Chordata</taxon>
        <taxon>Craniata</taxon>
        <taxon>Vertebrata</taxon>
        <taxon>Euteleostomi</taxon>
        <taxon>Actinopterygii</taxon>
        <taxon>Neopterygii</taxon>
        <taxon>Teleostei</taxon>
        <taxon>Ostariophysi</taxon>
        <taxon>Cypriniformes</taxon>
        <taxon>Danionidae</taxon>
        <taxon>Danioninae</taxon>
        <taxon>Danio</taxon>
    </lineage>
</organism>
<dbReference type="EC" id="3.1.1.-"/>
<dbReference type="EMBL" id="BC078354">
    <property type="protein sequence ID" value="AAH78354.1"/>
    <property type="molecule type" value="mRNA"/>
</dbReference>
<dbReference type="RefSeq" id="NP_001003499.1">
    <property type="nucleotide sequence ID" value="NM_001003499.1"/>
</dbReference>
<dbReference type="SMR" id="Q6DBU8"/>
<dbReference type="FunCoup" id="Q6DBU8">
    <property type="interactions" value="1040"/>
</dbReference>
<dbReference type="STRING" id="7955.ENSDARP00000014304"/>
<dbReference type="ESTHER" id="danre-LIPH">
    <property type="family name" value="Phospholipase"/>
</dbReference>
<dbReference type="GlyCosmos" id="Q6DBU8">
    <property type="glycosylation" value="5 sites, No reported glycans"/>
</dbReference>
<dbReference type="PaxDb" id="7955-ENSDARP00000014304"/>
<dbReference type="Ensembl" id="ENSDART00000023838">
    <property type="protein sequence ID" value="ENSDARP00000014304"/>
    <property type="gene ID" value="ENSDARG00000007108"/>
</dbReference>
<dbReference type="GeneID" id="445105"/>
<dbReference type="KEGG" id="dre:445105"/>
<dbReference type="AGR" id="ZFIN:ZDB-GENE-040801-242"/>
<dbReference type="CTD" id="445105"/>
<dbReference type="ZFIN" id="ZDB-GENE-040801-242">
    <property type="gene designation" value="lipia"/>
</dbReference>
<dbReference type="eggNOG" id="ENOG502QUQT">
    <property type="taxonomic scope" value="Eukaryota"/>
</dbReference>
<dbReference type="HOGENOM" id="CLU_027171_3_0_1"/>
<dbReference type="InParanoid" id="Q6DBU8"/>
<dbReference type="OMA" id="DALHTDM"/>
<dbReference type="OrthoDB" id="199913at2759"/>
<dbReference type="PhylomeDB" id="Q6DBU8"/>
<dbReference type="TreeFam" id="TF324997"/>
<dbReference type="Reactome" id="R-DRE-1483166">
    <property type="pathway name" value="Synthesis of PA"/>
</dbReference>
<dbReference type="PRO" id="PR:Q6DBU8"/>
<dbReference type="Proteomes" id="UP000000437">
    <property type="component" value="Chromosome 21"/>
</dbReference>
<dbReference type="Bgee" id="ENSDARG00000007108">
    <property type="expression patterns" value="Expressed in mature ovarian follicle and 26 other cell types or tissues"/>
</dbReference>
<dbReference type="ExpressionAtlas" id="Q6DBU8">
    <property type="expression patterns" value="baseline and differential"/>
</dbReference>
<dbReference type="GO" id="GO:0005615">
    <property type="term" value="C:extracellular space"/>
    <property type="evidence" value="ECO:0000318"/>
    <property type="project" value="GO_Central"/>
</dbReference>
<dbReference type="GO" id="GO:0005886">
    <property type="term" value="C:plasma membrane"/>
    <property type="evidence" value="ECO:0007669"/>
    <property type="project" value="UniProtKB-SubCell"/>
</dbReference>
<dbReference type="GO" id="GO:0052689">
    <property type="term" value="F:carboxylic ester hydrolase activity"/>
    <property type="evidence" value="ECO:0007669"/>
    <property type="project" value="InterPro"/>
</dbReference>
<dbReference type="GO" id="GO:0004620">
    <property type="term" value="F:phospholipase activity"/>
    <property type="evidence" value="ECO:0000318"/>
    <property type="project" value="GO_Central"/>
</dbReference>
<dbReference type="GO" id="GO:0016042">
    <property type="term" value="P:lipid catabolic process"/>
    <property type="evidence" value="ECO:0000318"/>
    <property type="project" value="GO_Central"/>
</dbReference>
<dbReference type="CDD" id="cd00707">
    <property type="entry name" value="Pancreat_lipase_like"/>
    <property type="match status" value="1"/>
</dbReference>
<dbReference type="FunFam" id="3.40.50.1820:FF:000063">
    <property type="entry name" value="Lipase member H"/>
    <property type="match status" value="1"/>
</dbReference>
<dbReference type="Gene3D" id="3.40.50.1820">
    <property type="entry name" value="alpha/beta hydrolase"/>
    <property type="match status" value="1"/>
</dbReference>
<dbReference type="InterPro" id="IPR029058">
    <property type="entry name" value="AB_hydrolase_fold"/>
</dbReference>
<dbReference type="InterPro" id="IPR013818">
    <property type="entry name" value="Lipase"/>
</dbReference>
<dbReference type="InterPro" id="IPR016272">
    <property type="entry name" value="Lipase_LIPH"/>
</dbReference>
<dbReference type="InterPro" id="IPR033906">
    <property type="entry name" value="Lipase_N"/>
</dbReference>
<dbReference type="InterPro" id="IPR000734">
    <property type="entry name" value="TAG_lipase"/>
</dbReference>
<dbReference type="PANTHER" id="PTHR11610">
    <property type="entry name" value="LIPASE"/>
    <property type="match status" value="1"/>
</dbReference>
<dbReference type="PANTHER" id="PTHR11610:SF12">
    <property type="entry name" value="LIPASE MEMBER H"/>
    <property type="match status" value="1"/>
</dbReference>
<dbReference type="Pfam" id="PF00151">
    <property type="entry name" value="Lipase"/>
    <property type="match status" value="1"/>
</dbReference>
<dbReference type="PIRSF" id="PIRSF000865">
    <property type="entry name" value="Lipoprotein_lipase_LIPH"/>
    <property type="match status" value="1"/>
</dbReference>
<dbReference type="PRINTS" id="PR00821">
    <property type="entry name" value="TAGLIPASE"/>
</dbReference>
<dbReference type="SUPFAM" id="SSF53474">
    <property type="entry name" value="alpha/beta-Hydrolases"/>
    <property type="match status" value="1"/>
</dbReference>
<comment type="function">
    <text evidence="2">Hydrolyzes specifically phosphatidic acid (PA) to produce 2-acyl lysophosphatidic acid (LPA; a potent bioactive lipid mediator) and fatty acid (By similarity). Does not hydrolyze other phospholipids, like phosphatidylserine (PS), phosphatidylcholine (PC) and phosphatidylethanolamine (PE) or triacylglycerol (TG) (By similarity).</text>
</comment>
<comment type="catalytic activity">
    <reaction evidence="2">
        <text>1-hexadecanoyl-2-(9Z-octadecenoyl)-sn-glycero-3-phosphate + H2O = 2-(9Z-octadecenoyl)-sn-glycero-3-phosphate + hexadecanoate + H(+)</text>
        <dbReference type="Rhea" id="RHEA:40943"/>
        <dbReference type="ChEBI" id="CHEBI:7896"/>
        <dbReference type="ChEBI" id="CHEBI:15377"/>
        <dbReference type="ChEBI" id="CHEBI:15378"/>
        <dbReference type="ChEBI" id="CHEBI:64839"/>
        <dbReference type="ChEBI" id="CHEBI:77593"/>
    </reaction>
    <physiologicalReaction direction="left-to-right" evidence="2">
        <dbReference type="Rhea" id="RHEA:40944"/>
    </physiologicalReaction>
</comment>
<comment type="subcellular location">
    <subcellularLocation>
        <location evidence="2">Secreted</location>
    </subcellularLocation>
    <subcellularLocation>
        <location evidence="2">Cell membrane</location>
        <topology>Peripheral membrane protein</topology>
    </subcellularLocation>
</comment>
<comment type="similarity">
    <text evidence="4">Belongs to the AB hydrolase superfamily. Lipase family.</text>
</comment>
<feature type="signal peptide" evidence="3">
    <location>
        <begin position="1"/>
        <end position="23"/>
    </location>
</feature>
<feature type="chain" id="PRO_0000273325" description="Lipase member H">
    <location>
        <begin position="24"/>
        <end position="454"/>
    </location>
</feature>
<feature type="active site" description="Nucleophile" evidence="1">
    <location>
        <position position="161"/>
    </location>
</feature>
<feature type="active site" description="Charge relay system" evidence="1">
    <location>
        <position position="185"/>
    </location>
</feature>
<feature type="active site" description="Charge relay system" evidence="1">
    <location>
        <position position="255"/>
    </location>
</feature>
<feature type="glycosylation site" description="N-linked (GlcNAc...) asparagine" evidence="3">
    <location>
        <position position="73"/>
    </location>
</feature>
<feature type="glycosylation site" description="N-linked (GlcNAc...) asparagine" evidence="3">
    <location>
        <position position="137"/>
    </location>
</feature>
<feature type="glycosylation site" description="N-linked (GlcNAc...) asparagine" evidence="3">
    <location>
        <position position="151"/>
    </location>
</feature>
<feature type="glycosylation site" description="N-linked (GlcNAc...) asparagine" evidence="3">
    <location>
        <position position="267"/>
    </location>
</feature>
<feature type="glycosylation site" description="N-linked (GlcNAc...) asparagine" evidence="3">
    <location>
        <position position="358"/>
    </location>
</feature>
<feature type="disulfide bond" evidence="1">
    <location>
        <begin position="240"/>
        <end position="253"/>
    </location>
</feature>
<feature type="disulfide bond" evidence="1">
    <location>
        <begin position="277"/>
        <end position="288"/>
    </location>
</feature>
<feature type="disulfide bond" evidence="1">
    <location>
        <begin position="291"/>
        <end position="299"/>
    </location>
</feature>
<feature type="disulfide bond" evidence="1">
    <location>
        <begin position="430"/>
        <end position="449"/>
    </location>
</feature>